<feature type="chain" id="PRO_0000210734" description="Uncharacterized protein MPN_586">
    <location>
        <begin position="1"/>
        <end position="347"/>
    </location>
</feature>
<protein>
    <recommendedName>
        <fullName>Uncharacterized protein MPN_586</fullName>
    </recommendedName>
</protein>
<name>Y586_MYCPN</name>
<proteinExistence type="inferred from homology"/>
<accession>P75194</accession>
<evidence type="ECO:0000305" key="1"/>
<comment type="similarity">
    <text evidence="1">Belongs to the MG067/MG068/MG395 family.</text>
</comment>
<dbReference type="EMBL" id="U00089">
    <property type="protein sequence ID" value="AAB95904.1"/>
    <property type="molecule type" value="Genomic_DNA"/>
</dbReference>
<dbReference type="EMBL" id="Z32671">
    <property type="status" value="NOT_ANNOTATED_CDS"/>
    <property type="molecule type" value="Genomic_DNA"/>
</dbReference>
<dbReference type="PIR" id="S73582">
    <property type="entry name" value="S73582"/>
</dbReference>
<dbReference type="RefSeq" id="NP_110275.1">
    <property type="nucleotide sequence ID" value="NC_000912.1"/>
</dbReference>
<dbReference type="IntAct" id="P75194">
    <property type="interactions" value="1"/>
</dbReference>
<dbReference type="STRING" id="272634.MPN_586"/>
<dbReference type="EnsemblBacteria" id="AAB95904">
    <property type="protein sequence ID" value="AAB95904"/>
    <property type="gene ID" value="MPN_586"/>
</dbReference>
<dbReference type="KEGG" id="mpn:MPN_586"/>
<dbReference type="PATRIC" id="fig|272634.6.peg.649"/>
<dbReference type="HOGENOM" id="CLU_038569_0_0_14"/>
<dbReference type="OrthoDB" id="395427at2"/>
<dbReference type="BioCyc" id="MPNE272634:G1GJ3-955-MONOMER"/>
<dbReference type="Proteomes" id="UP000000808">
    <property type="component" value="Chromosome"/>
</dbReference>
<dbReference type="Gene3D" id="2.40.10.10">
    <property type="entry name" value="Trypsin-like serine proteases"/>
    <property type="match status" value="1"/>
</dbReference>
<dbReference type="InterPro" id="IPR022382">
    <property type="entry name" value="Mycoplasma_peptidase_DUF31"/>
</dbReference>
<dbReference type="InterPro" id="IPR009003">
    <property type="entry name" value="Peptidase_S1_PA"/>
</dbReference>
<dbReference type="InterPro" id="IPR043504">
    <property type="entry name" value="Peptidase_S1_PA_chymotrypsin"/>
</dbReference>
<dbReference type="Pfam" id="PF01732">
    <property type="entry name" value="Mycop_pep_DUF31"/>
    <property type="match status" value="1"/>
</dbReference>
<dbReference type="SUPFAM" id="SSF50494">
    <property type="entry name" value="Trypsin-like serine proteases"/>
    <property type="match status" value="1"/>
</dbReference>
<keyword id="KW-1185">Reference proteome</keyword>
<organism>
    <name type="scientific">Mycoplasma pneumoniae (strain ATCC 29342 / M129 / Subtype 1)</name>
    <name type="common">Mycoplasmoides pneumoniae</name>
    <dbReference type="NCBI Taxonomy" id="272634"/>
    <lineage>
        <taxon>Bacteria</taxon>
        <taxon>Bacillati</taxon>
        <taxon>Mycoplasmatota</taxon>
        <taxon>Mycoplasmoidales</taxon>
        <taxon>Mycoplasmoidaceae</taxon>
        <taxon>Mycoplasmoides</taxon>
    </lineage>
</organism>
<reference key="1">
    <citation type="journal article" date="1996" name="Nucleic Acids Res.">
        <title>Complete sequence analysis of the genome of the bacterium Mycoplasma pneumoniae.</title>
        <authorList>
            <person name="Himmelreich R."/>
            <person name="Hilbert H."/>
            <person name="Plagens H."/>
            <person name="Pirkl E."/>
            <person name="Li B.-C."/>
            <person name="Herrmann R."/>
        </authorList>
    </citation>
    <scope>NUCLEOTIDE SEQUENCE [LARGE SCALE GENOMIC DNA]</scope>
    <source>
        <strain>ATCC 29342 / M129 / Subtype 1</strain>
    </source>
</reference>
<reference key="2">
    <citation type="journal article" date="1994" name="Mol. Microbiol.">
        <title>Identification and characterization of hitherto unknown Mycoplasma pneumoniae proteins.</title>
        <authorList>
            <person name="Proft T."/>
            <person name="Herrmann R."/>
        </authorList>
    </citation>
    <scope>NUCLEOTIDE SEQUENCE [GENOMIC DNA] OF 12-347</scope>
    <source>
        <strain>ATCC 29342 / M129 / Subtype 1</strain>
    </source>
</reference>
<gene>
    <name type="ordered locus">MPN_586</name>
    <name type="ORF">D02_orf347</name>
    <name type="ORF">MP256</name>
</gene>
<sequence length="347" mass="40216">MRQTIYLTVNLMQNWVERWILDWANILTWKTLCHQTKIGLPNGAQAFVSAQTSTIPKTAFTAHDFVDYTLPQEQKGKEQKEQQWMKNSQTKDTDVHPYADFAVLEILLFPDSSTDRKIFNHFIQPAIRAYKQLGDSLNIFANQTLDQPKHNRYYLLGYPFLRNKAASLFLNQTEQRKEHMDKTTQILHEKPFVVLTDPAKPTLIRNKGANFTGNTWTSNYDLSKKSGLYHKFLGKKYQIYGKSIVISDLNLSSGSSGSLLLNDRKQIVGIYFGVDGPKDELGFSQLLRWQAKNNDEEKDSVAYDLIFGNKNTTKYYAQFAKEHKTHLYEQIDRSNDQQFTFVKNQKC</sequence>